<sequence>MGQKVNPILFRLPVNRQWRSIWYADKKTFPRFIWEDYQIRKFIKKRLESAAVAKIVIERAGNRVRINIHTARPGLVIGRRAAELDKIKEEIMEIVEKGREVLVDVKEVKHPELEAQLVAENIALQIERRVAYRRAIKRAMQLTMDAGAVGIKVRCAGRLGGAEIARAERYHEGKVPLHSLRADVDYGFAEAKTVAGKIGVKVWICRKEDIATVVG</sequence>
<feature type="chain" id="PRO_1000140987" description="Small ribosomal subunit protein uS3">
    <location>
        <begin position="1"/>
        <end position="215"/>
    </location>
</feature>
<feature type="domain" description="KH type-2" evidence="1">
    <location>
        <begin position="39"/>
        <end position="109"/>
    </location>
</feature>
<keyword id="KW-0687">Ribonucleoprotein</keyword>
<keyword id="KW-0689">Ribosomal protein</keyword>
<keyword id="KW-0694">RNA-binding</keyword>
<keyword id="KW-0699">rRNA-binding</keyword>
<reference key="1">
    <citation type="journal article" date="2008" name="Biol. Direct">
        <title>Complete genome sequence of the extremely acidophilic methanotroph isolate V4, Methylacidiphilum infernorum, a representative of the bacterial phylum Verrucomicrobia.</title>
        <authorList>
            <person name="Hou S."/>
            <person name="Makarova K.S."/>
            <person name="Saw J.H."/>
            <person name="Senin P."/>
            <person name="Ly B.V."/>
            <person name="Zhou Z."/>
            <person name="Ren Y."/>
            <person name="Wang J."/>
            <person name="Galperin M.Y."/>
            <person name="Omelchenko M.V."/>
            <person name="Wolf Y.I."/>
            <person name="Yutin N."/>
            <person name="Koonin E.V."/>
            <person name="Stott M.B."/>
            <person name="Mountain B.W."/>
            <person name="Crowe M.A."/>
            <person name="Smirnova A.V."/>
            <person name="Dunfield P.F."/>
            <person name="Feng L."/>
            <person name="Wang L."/>
            <person name="Alam M."/>
        </authorList>
    </citation>
    <scope>NUCLEOTIDE SEQUENCE [LARGE SCALE GENOMIC DNA]</scope>
    <source>
        <strain>Isolate V4</strain>
    </source>
</reference>
<gene>
    <name evidence="1" type="primary">rpsC</name>
    <name type="ordered locus">Minf_0689</name>
</gene>
<protein>
    <recommendedName>
        <fullName evidence="1">Small ribosomal subunit protein uS3</fullName>
    </recommendedName>
    <alternativeName>
        <fullName evidence="2">30S ribosomal protein S3</fullName>
    </alternativeName>
</protein>
<proteinExistence type="inferred from homology"/>
<name>RS3_METI4</name>
<accession>B3E0J0</accession>
<evidence type="ECO:0000255" key="1">
    <source>
        <dbReference type="HAMAP-Rule" id="MF_01309"/>
    </source>
</evidence>
<evidence type="ECO:0000305" key="2"/>
<dbReference type="EMBL" id="CP000975">
    <property type="protein sequence ID" value="ACD82744.1"/>
    <property type="molecule type" value="Genomic_DNA"/>
</dbReference>
<dbReference type="RefSeq" id="WP_012463026.1">
    <property type="nucleotide sequence ID" value="NC_010794.1"/>
</dbReference>
<dbReference type="SMR" id="B3E0J0"/>
<dbReference type="STRING" id="481448.Minf_0689"/>
<dbReference type="KEGG" id="min:Minf_0689"/>
<dbReference type="eggNOG" id="COG0092">
    <property type="taxonomic scope" value="Bacteria"/>
</dbReference>
<dbReference type="HOGENOM" id="CLU_058591_0_2_0"/>
<dbReference type="OrthoDB" id="9806396at2"/>
<dbReference type="Proteomes" id="UP000009149">
    <property type="component" value="Chromosome"/>
</dbReference>
<dbReference type="GO" id="GO:0022627">
    <property type="term" value="C:cytosolic small ribosomal subunit"/>
    <property type="evidence" value="ECO:0007669"/>
    <property type="project" value="TreeGrafter"/>
</dbReference>
<dbReference type="GO" id="GO:0003729">
    <property type="term" value="F:mRNA binding"/>
    <property type="evidence" value="ECO:0007669"/>
    <property type="project" value="UniProtKB-UniRule"/>
</dbReference>
<dbReference type="GO" id="GO:0019843">
    <property type="term" value="F:rRNA binding"/>
    <property type="evidence" value="ECO:0007669"/>
    <property type="project" value="UniProtKB-UniRule"/>
</dbReference>
<dbReference type="GO" id="GO:0003735">
    <property type="term" value="F:structural constituent of ribosome"/>
    <property type="evidence" value="ECO:0007669"/>
    <property type="project" value="InterPro"/>
</dbReference>
<dbReference type="GO" id="GO:0006412">
    <property type="term" value="P:translation"/>
    <property type="evidence" value="ECO:0007669"/>
    <property type="project" value="UniProtKB-UniRule"/>
</dbReference>
<dbReference type="CDD" id="cd02412">
    <property type="entry name" value="KH-II_30S_S3"/>
    <property type="match status" value="1"/>
</dbReference>
<dbReference type="FunFam" id="3.30.300.20:FF:000001">
    <property type="entry name" value="30S ribosomal protein S3"/>
    <property type="match status" value="1"/>
</dbReference>
<dbReference type="Gene3D" id="3.30.300.20">
    <property type="match status" value="1"/>
</dbReference>
<dbReference type="Gene3D" id="3.30.1140.32">
    <property type="entry name" value="Ribosomal protein S3, C-terminal domain"/>
    <property type="match status" value="1"/>
</dbReference>
<dbReference type="HAMAP" id="MF_01309_B">
    <property type="entry name" value="Ribosomal_uS3_B"/>
    <property type="match status" value="1"/>
</dbReference>
<dbReference type="InterPro" id="IPR004087">
    <property type="entry name" value="KH_dom"/>
</dbReference>
<dbReference type="InterPro" id="IPR015946">
    <property type="entry name" value="KH_dom-like_a/b"/>
</dbReference>
<dbReference type="InterPro" id="IPR004044">
    <property type="entry name" value="KH_dom_type_2"/>
</dbReference>
<dbReference type="InterPro" id="IPR009019">
    <property type="entry name" value="KH_sf_prok-type"/>
</dbReference>
<dbReference type="InterPro" id="IPR036419">
    <property type="entry name" value="Ribosomal_S3_C_sf"/>
</dbReference>
<dbReference type="InterPro" id="IPR005704">
    <property type="entry name" value="Ribosomal_uS3_bac-typ"/>
</dbReference>
<dbReference type="InterPro" id="IPR001351">
    <property type="entry name" value="Ribosomal_uS3_C"/>
</dbReference>
<dbReference type="InterPro" id="IPR018280">
    <property type="entry name" value="Ribosomal_uS3_CS"/>
</dbReference>
<dbReference type="NCBIfam" id="TIGR01009">
    <property type="entry name" value="rpsC_bact"/>
    <property type="match status" value="1"/>
</dbReference>
<dbReference type="PANTHER" id="PTHR11760">
    <property type="entry name" value="30S/40S RIBOSOMAL PROTEIN S3"/>
    <property type="match status" value="1"/>
</dbReference>
<dbReference type="PANTHER" id="PTHR11760:SF19">
    <property type="entry name" value="SMALL RIBOSOMAL SUBUNIT PROTEIN US3C"/>
    <property type="match status" value="1"/>
</dbReference>
<dbReference type="Pfam" id="PF07650">
    <property type="entry name" value="KH_2"/>
    <property type="match status" value="1"/>
</dbReference>
<dbReference type="Pfam" id="PF00189">
    <property type="entry name" value="Ribosomal_S3_C"/>
    <property type="match status" value="1"/>
</dbReference>
<dbReference type="SMART" id="SM00322">
    <property type="entry name" value="KH"/>
    <property type="match status" value="1"/>
</dbReference>
<dbReference type="SUPFAM" id="SSF54814">
    <property type="entry name" value="Prokaryotic type KH domain (KH-domain type II)"/>
    <property type="match status" value="1"/>
</dbReference>
<dbReference type="SUPFAM" id="SSF54821">
    <property type="entry name" value="Ribosomal protein S3 C-terminal domain"/>
    <property type="match status" value="1"/>
</dbReference>
<dbReference type="PROSITE" id="PS50823">
    <property type="entry name" value="KH_TYPE_2"/>
    <property type="match status" value="1"/>
</dbReference>
<dbReference type="PROSITE" id="PS00548">
    <property type="entry name" value="RIBOSOMAL_S3"/>
    <property type="match status" value="1"/>
</dbReference>
<comment type="function">
    <text evidence="1">Binds the lower part of the 30S subunit head. Binds mRNA in the 70S ribosome, positioning it for translation.</text>
</comment>
<comment type="subunit">
    <text evidence="1">Part of the 30S ribosomal subunit. Forms a tight complex with proteins S10 and S14.</text>
</comment>
<comment type="similarity">
    <text evidence="1">Belongs to the universal ribosomal protein uS3 family.</text>
</comment>
<organism>
    <name type="scientific">Methylacidiphilum infernorum (isolate V4)</name>
    <name type="common">Methylokorus infernorum (strain V4)</name>
    <dbReference type="NCBI Taxonomy" id="481448"/>
    <lineage>
        <taxon>Bacteria</taxon>
        <taxon>Pseudomonadati</taxon>
        <taxon>Verrucomicrobiota</taxon>
        <taxon>Methylacidiphilae</taxon>
        <taxon>Methylacidiphilales</taxon>
        <taxon>Methylacidiphilaceae</taxon>
        <taxon>Methylacidiphilum (ex Ratnadevi et al. 2023)</taxon>
    </lineage>
</organism>